<proteinExistence type="evidence at protein level"/>
<reference key="1">
    <citation type="journal article" date="2002" name="Nature">
        <title>Sequence and analysis of rice chromosome 4.</title>
        <authorList>
            <person name="Feng Q."/>
            <person name="Zhang Y."/>
            <person name="Hao P."/>
            <person name="Wang S."/>
            <person name="Fu G."/>
            <person name="Huang Y."/>
            <person name="Li Y."/>
            <person name="Zhu J."/>
            <person name="Liu Y."/>
            <person name="Hu X."/>
            <person name="Jia P."/>
            <person name="Zhang Y."/>
            <person name="Zhao Q."/>
            <person name="Ying K."/>
            <person name="Yu S."/>
            <person name="Tang Y."/>
            <person name="Weng Q."/>
            <person name="Zhang L."/>
            <person name="Lu Y."/>
            <person name="Mu J."/>
            <person name="Lu Y."/>
            <person name="Zhang L.S."/>
            <person name="Yu Z."/>
            <person name="Fan D."/>
            <person name="Liu X."/>
            <person name="Lu T."/>
            <person name="Li C."/>
            <person name="Wu Y."/>
            <person name="Sun T."/>
            <person name="Lei H."/>
            <person name="Li T."/>
            <person name="Hu H."/>
            <person name="Guan J."/>
            <person name="Wu M."/>
            <person name="Zhang R."/>
            <person name="Zhou B."/>
            <person name="Chen Z."/>
            <person name="Chen L."/>
            <person name="Jin Z."/>
            <person name="Wang R."/>
            <person name="Yin H."/>
            <person name="Cai Z."/>
            <person name="Ren S."/>
            <person name="Lv G."/>
            <person name="Gu W."/>
            <person name="Zhu G."/>
            <person name="Tu Y."/>
            <person name="Jia J."/>
            <person name="Zhang Y."/>
            <person name="Chen J."/>
            <person name="Kang H."/>
            <person name="Chen X."/>
            <person name="Shao C."/>
            <person name="Sun Y."/>
            <person name="Hu Q."/>
            <person name="Zhang X."/>
            <person name="Zhang W."/>
            <person name="Wang L."/>
            <person name="Ding C."/>
            <person name="Sheng H."/>
            <person name="Gu J."/>
            <person name="Chen S."/>
            <person name="Ni L."/>
            <person name="Zhu F."/>
            <person name="Chen W."/>
            <person name="Lan L."/>
            <person name="Lai Y."/>
            <person name="Cheng Z."/>
            <person name="Gu M."/>
            <person name="Jiang J."/>
            <person name="Li J."/>
            <person name="Hong G."/>
            <person name="Xue Y."/>
            <person name="Han B."/>
        </authorList>
    </citation>
    <scope>NUCLEOTIDE SEQUENCE [LARGE SCALE GENOMIC DNA]</scope>
    <source>
        <strain>cv. Nipponbare</strain>
    </source>
</reference>
<reference key="2">
    <citation type="journal article" date="2005" name="Nature">
        <title>The map-based sequence of the rice genome.</title>
        <authorList>
            <consortium name="International rice genome sequencing project (IRGSP)"/>
        </authorList>
    </citation>
    <scope>NUCLEOTIDE SEQUENCE [LARGE SCALE GENOMIC DNA]</scope>
    <source>
        <strain>cv. Nipponbare</strain>
    </source>
</reference>
<reference key="3">
    <citation type="journal article" date="2008" name="Nucleic Acids Res.">
        <title>The rice annotation project database (RAP-DB): 2008 update.</title>
        <authorList>
            <consortium name="The rice annotation project (RAP)"/>
        </authorList>
    </citation>
    <scope>GENOME REANNOTATION</scope>
    <source>
        <strain>cv. Nipponbare</strain>
    </source>
</reference>
<reference key="4">
    <citation type="journal article" date="2013" name="Rice">
        <title>Improvement of the Oryza sativa Nipponbare reference genome using next generation sequence and optical map data.</title>
        <authorList>
            <person name="Kawahara Y."/>
            <person name="de la Bastide M."/>
            <person name="Hamilton J.P."/>
            <person name="Kanamori H."/>
            <person name="McCombie W.R."/>
            <person name="Ouyang S."/>
            <person name="Schwartz D.C."/>
            <person name="Tanaka T."/>
            <person name="Wu J."/>
            <person name="Zhou S."/>
            <person name="Childs K.L."/>
            <person name="Davidson R.M."/>
            <person name="Lin H."/>
            <person name="Quesada-Ocampo L."/>
            <person name="Vaillancourt B."/>
            <person name="Sakai H."/>
            <person name="Lee S.S."/>
            <person name="Kim J."/>
            <person name="Numa H."/>
            <person name="Itoh T."/>
            <person name="Buell C.R."/>
            <person name="Matsumoto T."/>
        </authorList>
    </citation>
    <scope>GENOME REANNOTATION</scope>
    <source>
        <strain>cv. Nipponbare</strain>
    </source>
</reference>
<reference key="5">
    <citation type="journal article" date="2005" name="PLoS Biol.">
        <title>The genomes of Oryza sativa: a history of duplications.</title>
        <authorList>
            <person name="Yu J."/>
            <person name="Wang J."/>
            <person name="Lin W."/>
            <person name="Li S."/>
            <person name="Li H."/>
            <person name="Zhou J."/>
            <person name="Ni P."/>
            <person name="Dong W."/>
            <person name="Hu S."/>
            <person name="Zeng C."/>
            <person name="Zhang J."/>
            <person name="Zhang Y."/>
            <person name="Li R."/>
            <person name="Xu Z."/>
            <person name="Li S."/>
            <person name="Li X."/>
            <person name="Zheng H."/>
            <person name="Cong L."/>
            <person name="Lin L."/>
            <person name="Yin J."/>
            <person name="Geng J."/>
            <person name="Li G."/>
            <person name="Shi J."/>
            <person name="Liu J."/>
            <person name="Lv H."/>
            <person name="Li J."/>
            <person name="Wang J."/>
            <person name="Deng Y."/>
            <person name="Ran L."/>
            <person name="Shi X."/>
            <person name="Wang X."/>
            <person name="Wu Q."/>
            <person name="Li C."/>
            <person name="Ren X."/>
            <person name="Wang J."/>
            <person name="Wang X."/>
            <person name="Li D."/>
            <person name="Liu D."/>
            <person name="Zhang X."/>
            <person name="Ji Z."/>
            <person name="Zhao W."/>
            <person name="Sun Y."/>
            <person name="Zhang Z."/>
            <person name="Bao J."/>
            <person name="Han Y."/>
            <person name="Dong L."/>
            <person name="Ji J."/>
            <person name="Chen P."/>
            <person name="Wu S."/>
            <person name="Liu J."/>
            <person name="Xiao Y."/>
            <person name="Bu D."/>
            <person name="Tan J."/>
            <person name="Yang L."/>
            <person name="Ye C."/>
            <person name="Zhang J."/>
            <person name="Xu J."/>
            <person name="Zhou Y."/>
            <person name="Yu Y."/>
            <person name="Zhang B."/>
            <person name="Zhuang S."/>
            <person name="Wei H."/>
            <person name="Liu B."/>
            <person name="Lei M."/>
            <person name="Yu H."/>
            <person name="Li Y."/>
            <person name="Xu H."/>
            <person name="Wei S."/>
            <person name="He X."/>
            <person name="Fang L."/>
            <person name="Zhang Z."/>
            <person name="Zhang Y."/>
            <person name="Huang X."/>
            <person name="Su Z."/>
            <person name="Tong W."/>
            <person name="Li J."/>
            <person name="Tong Z."/>
            <person name="Li S."/>
            <person name="Ye J."/>
            <person name="Wang L."/>
            <person name="Fang L."/>
            <person name="Lei T."/>
            <person name="Chen C.-S."/>
            <person name="Chen H.-C."/>
            <person name="Xu Z."/>
            <person name="Li H."/>
            <person name="Huang H."/>
            <person name="Zhang F."/>
            <person name="Xu H."/>
            <person name="Li N."/>
            <person name="Zhao C."/>
            <person name="Li S."/>
            <person name="Dong L."/>
            <person name="Huang Y."/>
            <person name="Li L."/>
            <person name="Xi Y."/>
            <person name="Qi Q."/>
            <person name="Li W."/>
            <person name="Zhang B."/>
            <person name="Hu W."/>
            <person name="Zhang Y."/>
            <person name="Tian X."/>
            <person name="Jiao Y."/>
            <person name="Liang X."/>
            <person name="Jin J."/>
            <person name="Gao L."/>
            <person name="Zheng W."/>
            <person name="Hao B."/>
            <person name="Liu S.-M."/>
            <person name="Wang W."/>
            <person name="Yuan L."/>
            <person name="Cao M."/>
            <person name="McDermott J."/>
            <person name="Samudrala R."/>
            <person name="Wang J."/>
            <person name="Wong G.K.-S."/>
            <person name="Yang H."/>
        </authorList>
    </citation>
    <scope>NUCLEOTIDE SEQUENCE [LARGE SCALE GENOMIC DNA]</scope>
    <source>
        <strain>cv. Nipponbare</strain>
    </source>
</reference>
<reference key="6">
    <citation type="journal article" date="2003" name="Science">
        <title>Collection, mapping, and annotation of over 28,000 cDNA clones from japonica rice.</title>
        <authorList>
            <consortium name="The rice full-length cDNA consortium"/>
        </authorList>
    </citation>
    <scope>NUCLEOTIDE SEQUENCE [LARGE SCALE MRNA]</scope>
    <source>
        <strain>cv. Nipponbare</strain>
    </source>
</reference>
<reference key="7">
    <citation type="journal article" date="2014" name="Plant Physiol.">
        <title>Cytochrome P450 93G1 is a flavone synthase II that channels flavanones to the biosynthesis of tricin O-linked conjugates in rice.</title>
        <authorList>
            <person name="Lam P.Y."/>
            <person name="Zhu F.Y."/>
            <person name="Chan W.L."/>
            <person name="Liu H."/>
            <person name="Lo C."/>
        </authorList>
    </citation>
    <scope>FUNCTION</scope>
    <scope>CATALYTIC ACTIVITY</scope>
    <scope>BIOPHYSICOCHEMICAL PROPERTIES</scope>
</reference>
<reference key="8">
    <citation type="journal article" date="2017" name="Plant Physiol.">
        <title>Disrupting flavone synthase II alters lignin and improves biomass digestibility.</title>
        <authorList>
            <person name="Lam P.Y."/>
            <person name="Tobimatsu Y."/>
            <person name="Takeda Y."/>
            <person name="Suzuki S."/>
            <person name="Yamamura M."/>
            <person name="Umezawa T."/>
            <person name="Lo C."/>
        </authorList>
    </citation>
    <scope>FUNCTION</scope>
    <scope>DISRUPTION PHENOTYPE</scope>
</reference>
<sequence>MASLMEVQVPLLGMGTTMGALALALVVVVVVHVAVNAFGRRRLPPSPASLPVIGHLHLLRPPVHRTFHELAARLGPLMHVRLGSTHCVVASSAEVAAELIRSHEAKISERPLTAVARQFAYESAGFAFAPYSPHWRFMKRLCMSELLGPRTVEQLRPVRRAGLVSLLRHVLSQPEAEAVDLTRELIRMSNTSIIRMAASTVPSSVTEEAQELVKVVAELVGAFNADDYIALCRGWDLQGLGRRAADVHKRFDALLEEMIRHKEEARMRKKTDTDVGSKDLLDILLDKAEDGAAEVKLTRDNIKAFIIDVVTAGSDTSAAMVEWMVAELMNHPEALRKVREEIEAVVGRDRIAGEGDLPRLPYLQAAYKETLRLRPAAPIAHRQSTEEIQIRGFRVPAQTAVFINVWAIGRDPAYWEEPLEFRPERFLAGGGGEGVEPRGQHFQFMPFGSGRRGCPGMGLALQSVPAVVAALLQCFDWQCMDNKLIDMEEADGLVCARKHRLLLHAHPRLHPFPPLL</sequence>
<feature type="chain" id="PRO_0000440768" description="Cytochrome P450 93G1">
    <location>
        <begin position="1"/>
        <end position="516"/>
    </location>
</feature>
<feature type="transmembrane region" description="Helical" evidence="2">
    <location>
        <begin position="11"/>
        <end position="31"/>
    </location>
</feature>
<feature type="binding site" description="axial binding residue" evidence="1">
    <location>
        <position position="454"/>
    </location>
    <ligand>
        <name>heme</name>
        <dbReference type="ChEBI" id="CHEBI:30413"/>
    </ligand>
    <ligandPart>
        <name>Fe</name>
        <dbReference type="ChEBI" id="CHEBI:18248"/>
    </ligandPart>
</feature>
<keyword id="KW-0284">Flavonoid biosynthesis</keyword>
<keyword id="KW-0349">Heme</keyword>
<keyword id="KW-0408">Iron</keyword>
<keyword id="KW-0472">Membrane</keyword>
<keyword id="KW-0479">Metal-binding</keyword>
<keyword id="KW-0503">Monooxygenase</keyword>
<keyword id="KW-0560">Oxidoreductase</keyword>
<keyword id="KW-1185">Reference proteome</keyword>
<keyword id="KW-0812">Transmembrane</keyword>
<keyword id="KW-1133">Transmembrane helix</keyword>
<gene>
    <name evidence="5" type="primary">CYP93G1</name>
    <name evidence="7" type="ordered locus">Os04g0101400</name>
    <name evidence="6" type="ordered locus">LOC_Os04g01140</name>
    <name evidence="9" type="ORF">B1160F02.15</name>
    <name evidence="10" type="ORF">OsJ_13492</name>
    <name evidence="8" type="ORF">OSJNBa0068L06.2</name>
</gene>
<name>C93G1_ORYSJ</name>
<protein>
    <recommendedName>
        <fullName evidence="5">Cytochrome P450 93G1</fullName>
        <ecNumber evidence="3">1.14.19.76</ecNumber>
    </recommendedName>
    <alternativeName>
        <fullName evidence="5">Flavone synthase II</fullName>
        <shortName evidence="5">OsFNSII</shortName>
    </alternativeName>
</protein>
<organism>
    <name type="scientific">Oryza sativa subsp. japonica</name>
    <name type="common">Rice</name>
    <dbReference type="NCBI Taxonomy" id="39947"/>
    <lineage>
        <taxon>Eukaryota</taxon>
        <taxon>Viridiplantae</taxon>
        <taxon>Streptophyta</taxon>
        <taxon>Embryophyta</taxon>
        <taxon>Tracheophyta</taxon>
        <taxon>Spermatophyta</taxon>
        <taxon>Magnoliopsida</taxon>
        <taxon>Liliopsida</taxon>
        <taxon>Poales</taxon>
        <taxon>Poaceae</taxon>
        <taxon>BOP clade</taxon>
        <taxon>Oryzoideae</taxon>
        <taxon>Oryzeae</taxon>
        <taxon>Oryzinae</taxon>
        <taxon>Oryza</taxon>
        <taxon>Oryza sativa</taxon>
    </lineage>
</organism>
<dbReference type="EC" id="1.14.19.76" evidence="3"/>
<dbReference type="EMBL" id="AL606442">
    <property type="protein sequence ID" value="CAE01576.2"/>
    <property type="status" value="ALT_INIT"/>
    <property type="molecule type" value="Genomic_DNA"/>
</dbReference>
<dbReference type="EMBL" id="BX842604">
    <property type="protein sequence ID" value="CAE75984.1"/>
    <property type="status" value="ALT_INIT"/>
    <property type="molecule type" value="Genomic_DNA"/>
</dbReference>
<dbReference type="EMBL" id="AP008210">
    <property type="protein sequence ID" value="BAF13905.1"/>
    <property type="molecule type" value="Genomic_DNA"/>
</dbReference>
<dbReference type="EMBL" id="AP014960">
    <property type="protein sequence ID" value="BAS87506.1"/>
    <property type="molecule type" value="Genomic_DNA"/>
</dbReference>
<dbReference type="EMBL" id="CM000141">
    <property type="protein sequence ID" value="EAZ29419.1"/>
    <property type="status" value="ALT_INIT"/>
    <property type="molecule type" value="Genomic_DNA"/>
</dbReference>
<dbReference type="EMBL" id="AK100972">
    <property type="protein sequence ID" value="BAG94859.1"/>
    <property type="molecule type" value="mRNA"/>
</dbReference>
<dbReference type="SMR" id="Q0JFI2"/>
<dbReference type="FunCoup" id="Q0JFI2">
    <property type="interactions" value="449"/>
</dbReference>
<dbReference type="STRING" id="39947.Q0JFI2"/>
<dbReference type="PaxDb" id="39947-Q0JFI2"/>
<dbReference type="EnsemblPlants" id="Os04t0101400-01">
    <property type="protein sequence ID" value="Os04t0101400-01"/>
    <property type="gene ID" value="Os04g0101400"/>
</dbReference>
<dbReference type="Gramene" id="Os04t0101400-01">
    <property type="protein sequence ID" value="Os04t0101400-01"/>
    <property type="gene ID" value="Os04g0101400"/>
</dbReference>
<dbReference type="KEGG" id="dosa:Os04g0101400"/>
<dbReference type="KEGG" id="osa:4334886"/>
<dbReference type="eggNOG" id="KOG0156">
    <property type="taxonomic scope" value="Eukaryota"/>
</dbReference>
<dbReference type="HOGENOM" id="CLU_001570_4_0_1"/>
<dbReference type="InParanoid" id="Q0JFI2"/>
<dbReference type="OMA" id="TSIIRMA"/>
<dbReference type="OrthoDB" id="1103324at2759"/>
<dbReference type="BioCyc" id="MetaCyc:MONOMER-20524"/>
<dbReference type="BRENDA" id="1.14.19.76">
    <property type="organism ID" value="4460"/>
</dbReference>
<dbReference type="PlantReactome" id="R-OSA-9609573">
    <property type="pathway name" value="Tricin biosynthesis"/>
</dbReference>
<dbReference type="UniPathway" id="UPA00154"/>
<dbReference type="Proteomes" id="UP000000763">
    <property type="component" value="Chromosome 4"/>
</dbReference>
<dbReference type="Proteomes" id="UP000007752">
    <property type="component" value="Chromosome 4"/>
</dbReference>
<dbReference type="Proteomes" id="UP000059680">
    <property type="component" value="Chromosome 4"/>
</dbReference>
<dbReference type="GO" id="GO:0016020">
    <property type="term" value="C:membrane"/>
    <property type="evidence" value="ECO:0000318"/>
    <property type="project" value="GO_Central"/>
</dbReference>
<dbReference type="GO" id="GO:0020037">
    <property type="term" value="F:heme binding"/>
    <property type="evidence" value="ECO:0007669"/>
    <property type="project" value="InterPro"/>
</dbReference>
<dbReference type="GO" id="GO:0005506">
    <property type="term" value="F:iron ion binding"/>
    <property type="evidence" value="ECO:0007669"/>
    <property type="project" value="InterPro"/>
</dbReference>
<dbReference type="GO" id="GO:0016709">
    <property type="term" value="F:oxidoreductase activity, acting on paired donors, with incorporation or reduction of molecular oxygen, NAD(P)H as one donor, and incorporation of one atom of oxygen"/>
    <property type="evidence" value="ECO:0000318"/>
    <property type="project" value="GO_Central"/>
</dbReference>
<dbReference type="GO" id="GO:0016717">
    <property type="term" value="F:oxidoreductase activity, acting on paired donors, with oxidation of a pair of donors resulting in the reduction of molecular oxygen to two molecules of water"/>
    <property type="evidence" value="ECO:0000314"/>
    <property type="project" value="UniProtKB"/>
</dbReference>
<dbReference type="GO" id="GO:0051553">
    <property type="term" value="P:flavone biosynthetic process"/>
    <property type="evidence" value="ECO:0000314"/>
    <property type="project" value="UniProtKB"/>
</dbReference>
<dbReference type="GO" id="GO:0033511">
    <property type="term" value="P:luteolin biosynthetic process"/>
    <property type="evidence" value="ECO:0000314"/>
    <property type="project" value="UniProtKB"/>
</dbReference>
<dbReference type="CDD" id="cd20655">
    <property type="entry name" value="CYP93"/>
    <property type="match status" value="1"/>
</dbReference>
<dbReference type="FunFam" id="1.10.630.10:FF:000019">
    <property type="entry name" value="Cytochrome P450 family protein"/>
    <property type="match status" value="1"/>
</dbReference>
<dbReference type="Gene3D" id="1.10.630.10">
    <property type="entry name" value="Cytochrome P450"/>
    <property type="match status" value="1"/>
</dbReference>
<dbReference type="InterPro" id="IPR001128">
    <property type="entry name" value="Cyt_P450"/>
</dbReference>
<dbReference type="InterPro" id="IPR017972">
    <property type="entry name" value="Cyt_P450_CS"/>
</dbReference>
<dbReference type="InterPro" id="IPR002401">
    <property type="entry name" value="Cyt_P450_E_grp-I"/>
</dbReference>
<dbReference type="InterPro" id="IPR036396">
    <property type="entry name" value="Cyt_P450_sf"/>
</dbReference>
<dbReference type="PANTHER" id="PTHR47944:SF17">
    <property type="entry name" value="3,9-DIHYDROXYPTEROCARPAN 6A-MONOOXYGENASE"/>
    <property type="match status" value="1"/>
</dbReference>
<dbReference type="PANTHER" id="PTHR47944">
    <property type="entry name" value="CYTOCHROME P450 98A9"/>
    <property type="match status" value="1"/>
</dbReference>
<dbReference type="Pfam" id="PF00067">
    <property type="entry name" value="p450"/>
    <property type="match status" value="1"/>
</dbReference>
<dbReference type="PRINTS" id="PR00463">
    <property type="entry name" value="EP450I"/>
</dbReference>
<dbReference type="PRINTS" id="PR00385">
    <property type="entry name" value="P450"/>
</dbReference>
<dbReference type="SUPFAM" id="SSF48264">
    <property type="entry name" value="Cytochrome P450"/>
    <property type="match status" value="1"/>
</dbReference>
<dbReference type="PROSITE" id="PS00086">
    <property type="entry name" value="CYTOCHROME_P450"/>
    <property type="match status" value="1"/>
</dbReference>
<accession>Q0JFI2</accession>
<accession>Q7XTC1</accession>
<comment type="function">
    <text evidence="3 4">Functions as a flavone synthase II (FNSII) that catalyzes the direct conversion of flavanones to flavones (PubMed:24843076). In vitro, can convert naringenin and eriodictyol to apigenin and luteolin, respectively (PubMed:24843076). Acts as a key branch point enzyme that channels flavanones to the biosynthesis of soluble tricin O-linked conjugates (PubMed:24843076, PubMed:28385728).</text>
</comment>
<comment type="catalytic activity">
    <reaction evidence="3">
        <text>a flavanone + reduced [NADPH--hemoprotein reductase] + O2 = a flavone + oxidized [NADPH--hemoprotein reductase] + 2 H2O + H(+)</text>
        <dbReference type="Rhea" id="RHEA:57680"/>
        <dbReference type="Rhea" id="RHEA-COMP:11964"/>
        <dbReference type="Rhea" id="RHEA-COMP:11965"/>
        <dbReference type="ChEBI" id="CHEBI:15377"/>
        <dbReference type="ChEBI" id="CHEBI:15378"/>
        <dbReference type="ChEBI" id="CHEBI:15379"/>
        <dbReference type="ChEBI" id="CHEBI:24043"/>
        <dbReference type="ChEBI" id="CHEBI:28863"/>
        <dbReference type="ChEBI" id="CHEBI:57618"/>
        <dbReference type="ChEBI" id="CHEBI:58210"/>
        <dbReference type="EC" id="1.14.19.76"/>
    </reaction>
    <physiologicalReaction direction="left-to-right" evidence="3">
        <dbReference type="Rhea" id="RHEA:57681"/>
    </physiologicalReaction>
</comment>
<comment type="cofactor">
    <cofactor evidence="1">
        <name>heme</name>
        <dbReference type="ChEBI" id="CHEBI:30413"/>
    </cofactor>
</comment>
<comment type="biophysicochemical properties">
    <kinetics>
        <KM evidence="3">3.2 uM for naringenin</KM>
        <KM evidence="3">1.5 uM for eriodictyol</KM>
    </kinetics>
</comment>
<comment type="pathway">
    <text evidence="6">Secondary metabolite biosynthesis; flavonoid biosynthesis.</text>
</comment>
<comment type="subcellular location">
    <subcellularLocation>
        <location evidence="2">Membrane</location>
        <topology evidence="2">Single-pass membrane protein</topology>
    </subcellularLocation>
</comment>
<comment type="disruption phenotype">
    <text evidence="4">Slight reduction in plant height (PubMed:28385728). In cell wall, altered content and composition of lignins derived from typical monolignols (PubMed:28385728).</text>
</comment>
<comment type="similarity">
    <text evidence="6">Belongs to the cytochrome P450 family.</text>
</comment>
<comment type="sequence caution" evidence="6">
    <conflict type="erroneous initiation">
        <sequence resource="EMBL-CDS" id="CAE01576"/>
    </conflict>
    <text>Truncated N-terminus.</text>
</comment>
<comment type="sequence caution" evidence="6">
    <conflict type="erroneous initiation">
        <sequence resource="EMBL-CDS" id="CAE75984"/>
    </conflict>
    <text>Truncated N-terminus.</text>
</comment>
<comment type="sequence caution" evidence="6">
    <conflict type="erroneous initiation">
        <sequence resource="EMBL-CDS" id="EAZ29419"/>
    </conflict>
    <text>Truncated N-terminus.</text>
</comment>
<evidence type="ECO:0000250" key="1">
    <source>
        <dbReference type="UniProtKB" id="Q94IP1"/>
    </source>
</evidence>
<evidence type="ECO:0000255" key="2"/>
<evidence type="ECO:0000269" key="3">
    <source>
    </source>
</evidence>
<evidence type="ECO:0000269" key="4">
    <source>
    </source>
</evidence>
<evidence type="ECO:0000303" key="5">
    <source>
    </source>
</evidence>
<evidence type="ECO:0000305" key="6"/>
<evidence type="ECO:0000312" key="7">
    <source>
        <dbReference type="EMBL" id="BAF13905.1"/>
    </source>
</evidence>
<evidence type="ECO:0000312" key="8">
    <source>
        <dbReference type="EMBL" id="CAE01576.2"/>
    </source>
</evidence>
<evidence type="ECO:0000312" key="9">
    <source>
        <dbReference type="EMBL" id="CAE75984.1"/>
    </source>
</evidence>
<evidence type="ECO:0000312" key="10">
    <source>
        <dbReference type="EMBL" id="EAZ29419.1"/>
    </source>
</evidence>